<proteinExistence type="evidence at protein level"/>
<protein>
    <recommendedName>
        <fullName>Meiotically up-regulated gene 123 protein</fullName>
    </recommendedName>
</protein>
<sequence>MERLATRSSHDDPYSRSSLPTSNAINSNHESNGSTFSYVQSLRRAKATVWSDIGRVAPLHSSPSIKSSSQNGKSSSKGLGGMRSRVFSSQHHGVYHTRPASLHSRTMAPQHTILTPRLSATEGKDDDEDELVISTSNTAPTYISMIESSRASSTHSGTAPSIMGMSIHSRADSRAETTQSDGFESRSGSPTHDIQSYLVNRRSSSSESSDEDSAEEGMKRLVITNMGDNDEFDSD</sequence>
<keyword id="KW-0963">Cytoplasm</keyword>
<keyword id="KW-0469">Meiosis</keyword>
<keyword id="KW-0539">Nucleus</keyword>
<keyword id="KW-0597">Phosphoprotein</keyword>
<keyword id="KW-1185">Reference proteome</keyword>
<keyword id="KW-0749">Sporulation</keyword>
<organism>
    <name type="scientific">Schizosaccharomyces pombe (strain 972 / ATCC 24843)</name>
    <name type="common">Fission yeast</name>
    <dbReference type="NCBI Taxonomy" id="284812"/>
    <lineage>
        <taxon>Eukaryota</taxon>
        <taxon>Fungi</taxon>
        <taxon>Dikarya</taxon>
        <taxon>Ascomycota</taxon>
        <taxon>Taphrinomycotina</taxon>
        <taxon>Schizosaccharomycetes</taxon>
        <taxon>Schizosaccharomycetales</taxon>
        <taxon>Schizosaccharomycetaceae</taxon>
        <taxon>Schizosaccharomyces</taxon>
    </lineage>
</organism>
<name>MU123_SCHPO</name>
<gene>
    <name type="primary">mug123</name>
    <name type="ORF">SPCC16C4.17</name>
</gene>
<evidence type="ECO:0000256" key="1">
    <source>
        <dbReference type="SAM" id="MobiDB-lite"/>
    </source>
</evidence>
<evidence type="ECO:0000269" key="2">
    <source>
    </source>
</evidence>
<evidence type="ECO:0000269" key="3">
    <source>
    </source>
</evidence>
<evidence type="ECO:0000269" key="4">
    <source>
    </source>
</evidence>
<comment type="function">
    <text evidence="2">Involved in sporulation and has a role in meiosis.</text>
</comment>
<comment type="subcellular location">
    <subcellularLocation>
        <location evidence="3">Cytoplasm</location>
    </subcellularLocation>
    <subcellularLocation>
        <location evidence="3">Nucleus</location>
    </subcellularLocation>
</comment>
<feature type="chain" id="PRO_0000278622" description="Meiotically up-regulated gene 123 protein">
    <location>
        <begin position="1"/>
        <end position="235"/>
    </location>
</feature>
<feature type="region of interest" description="Disordered" evidence="1">
    <location>
        <begin position="1"/>
        <end position="34"/>
    </location>
</feature>
<feature type="region of interest" description="Disordered" evidence="1">
    <location>
        <begin position="58"/>
        <end position="83"/>
    </location>
</feature>
<feature type="region of interest" description="Disordered" evidence="1">
    <location>
        <begin position="169"/>
        <end position="235"/>
    </location>
</feature>
<feature type="compositionally biased region" description="Basic and acidic residues" evidence="1">
    <location>
        <begin position="1"/>
        <end position="14"/>
    </location>
</feature>
<feature type="compositionally biased region" description="Polar residues" evidence="1">
    <location>
        <begin position="15"/>
        <end position="34"/>
    </location>
</feature>
<feature type="compositionally biased region" description="Low complexity" evidence="1">
    <location>
        <begin position="61"/>
        <end position="77"/>
    </location>
</feature>
<feature type="compositionally biased region" description="Polar residues" evidence="1">
    <location>
        <begin position="176"/>
        <end position="202"/>
    </location>
</feature>
<feature type="modified residue" description="Phosphoserine" evidence="4">
    <location>
        <position position="180"/>
    </location>
</feature>
<feature type="modified residue" description="Phosphoserine" evidence="4">
    <location>
        <position position="187"/>
    </location>
</feature>
<feature type="modified residue" description="Phosphoserine" evidence="4">
    <location>
        <position position="189"/>
    </location>
</feature>
<feature type="modified residue" description="Phosphothreonine" evidence="4">
    <location>
        <position position="191"/>
    </location>
</feature>
<dbReference type="EMBL" id="CU329672">
    <property type="protein sequence ID" value="CAA20755.1"/>
    <property type="molecule type" value="Genomic_DNA"/>
</dbReference>
<dbReference type="PIR" id="T41107">
    <property type="entry name" value="T41107"/>
</dbReference>
<dbReference type="RefSeq" id="NP_587927.1">
    <property type="nucleotide sequence ID" value="NM_001022918.2"/>
</dbReference>
<dbReference type="BioGRID" id="275493">
    <property type="interactions" value="44"/>
</dbReference>
<dbReference type="STRING" id="284812.O74461"/>
<dbReference type="iPTMnet" id="O74461"/>
<dbReference type="PaxDb" id="4896-SPCC16C4.17.1"/>
<dbReference type="EnsemblFungi" id="SPCC16C4.17.1">
    <property type="protein sequence ID" value="SPCC16C4.17.1:pep"/>
    <property type="gene ID" value="SPCC16C4.17"/>
</dbReference>
<dbReference type="GeneID" id="2538916"/>
<dbReference type="KEGG" id="spo:2538916"/>
<dbReference type="PomBase" id="SPCC16C4.17">
    <property type="gene designation" value="mug123"/>
</dbReference>
<dbReference type="VEuPathDB" id="FungiDB:SPCC16C4.17"/>
<dbReference type="eggNOG" id="ENOG502T0ZM">
    <property type="taxonomic scope" value="Eukaryota"/>
</dbReference>
<dbReference type="HOGENOM" id="CLU_1185617_0_0_1"/>
<dbReference type="InParanoid" id="O74461"/>
<dbReference type="OMA" id="MAPQHTI"/>
<dbReference type="PRO" id="PR:O74461"/>
<dbReference type="Proteomes" id="UP000002485">
    <property type="component" value="Chromosome III"/>
</dbReference>
<dbReference type="GO" id="GO:0005829">
    <property type="term" value="C:cytosol"/>
    <property type="evidence" value="ECO:0007005"/>
    <property type="project" value="PomBase"/>
</dbReference>
<dbReference type="GO" id="GO:0005634">
    <property type="term" value="C:nucleus"/>
    <property type="evidence" value="ECO:0007005"/>
    <property type="project" value="PomBase"/>
</dbReference>
<dbReference type="GO" id="GO:0051321">
    <property type="term" value="P:meiotic cell cycle"/>
    <property type="evidence" value="ECO:0007669"/>
    <property type="project" value="UniProtKB-KW"/>
</dbReference>
<dbReference type="GO" id="GO:0030435">
    <property type="term" value="P:sporulation resulting in formation of a cellular spore"/>
    <property type="evidence" value="ECO:0007669"/>
    <property type="project" value="UniProtKB-KW"/>
</dbReference>
<accession>O74461</accession>
<reference key="1">
    <citation type="journal article" date="2002" name="Nature">
        <title>The genome sequence of Schizosaccharomyces pombe.</title>
        <authorList>
            <person name="Wood V."/>
            <person name="Gwilliam R."/>
            <person name="Rajandream M.A."/>
            <person name="Lyne M.H."/>
            <person name="Lyne R."/>
            <person name="Stewart A."/>
            <person name="Sgouros J.G."/>
            <person name="Peat N."/>
            <person name="Hayles J."/>
            <person name="Baker S.G."/>
            <person name="Basham D."/>
            <person name="Bowman S."/>
            <person name="Brooks K."/>
            <person name="Brown D."/>
            <person name="Brown S."/>
            <person name="Chillingworth T."/>
            <person name="Churcher C.M."/>
            <person name="Collins M."/>
            <person name="Connor R."/>
            <person name="Cronin A."/>
            <person name="Davis P."/>
            <person name="Feltwell T."/>
            <person name="Fraser A."/>
            <person name="Gentles S."/>
            <person name="Goble A."/>
            <person name="Hamlin N."/>
            <person name="Harris D.E."/>
            <person name="Hidalgo J."/>
            <person name="Hodgson G."/>
            <person name="Holroyd S."/>
            <person name="Hornsby T."/>
            <person name="Howarth S."/>
            <person name="Huckle E.J."/>
            <person name="Hunt S."/>
            <person name="Jagels K."/>
            <person name="James K.D."/>
            <person name="Jones L."/>
            <person name="Jones M."/>
            <person name="Leather S."/>
            <person name="McDonald S."/>
            <person name="McLean J."/>
            <person name="Mooney P."/>
            <person name="Moule S."/>
            <person name="Mungall K.L."/>
            <person name="Murphy L.D."/>
            <person name="Niblett D."/>
            <person name="Odell C."/>
            <person name="Oliver K."/>
            <person name="O'Neil S."/>
            <person name="Pearson D."/>
            <person name="Quail M.A."/>
            <person name="Rabbinowitsch E."/>
            <person name="Rutherford K.M."/>
            <person name="Rutter S."/>
            <person name="Saunders D."/>
            <person name="Seeger K."/>
            <person name="Sharp S."/>
            <person name="Skelton J."/>
            <person name="Simmonds M.N."/>
            <person name="Squares R."/>
            <person name="Squares S."/>
            <person name="Stevens K."/>
            <person name="Taylor K."/>
            <person name="Taylor R.G."/>
            <person name="Tivey A."/>
            <person name="Walsh S.V."/>
            <person name="Warren T."/>
            <person name="Whitehead S."/>
            <person name="Woodward J.R."/>
            <person name="Volckaert G."/>
            <person name="Aert R."/>
            <person name="Robben J."/>
            <person name="Grymonprez B."/>
            <person name="Weltjens I."/>
            <person name="Vanstreels E."/>
            <person name="Rieger M."/>
            <person name="Schaefer M."/>
            <person name="Mueller-Auer S."/>
            <person name="Gabel C."/>
            <person name="Fuchs M."/>
            <person name="Duesterhoeft A."/>
            <person name="Fritzc C."/>
            <person name="Holzer E."/>
            <person name="Moestl D."/>
            <person name="Hilbert H."/>
            <person name="Borzym K."/>
            <person name="Langer I."/>
            <person name="Beck A."/>
            <person name="Lehrach H."/>
            <person name="Reinhardt R."/>
            <person name="Pohl T.M."/>
            <person name="Eger P."/>
            <person name="Zimmermann W."/>
            <person name="Wedler H."/>
            <person name="Wambutt R."/>
            <person name="Purnelle B."/>
            <person name="Goffeau A."/>
            <person name="Cadieu E."/>
            <person name="Dreano S."/>
            <person name="Gloux S."/>
            <person name="Lelaure V."/>
            <person name="Mottier S."/>
            <person name="Galibert F."/>
            <person name="Aves S.J."/>
            <person name="Xiang Z."/>
            <person name="Hunt C."/>
            <person name="Moore K."/>
            <person name="Hurst S.M."/>
            <person name="Lucas M."/>
            <person name="Rochet M."/>
            <person name="Gaillardin C."/>
            <person name="Tallada V.A."/>
            <person name="Garzon A."/>
            <person name="Thode G."/>
            <person name="Daga R.R."/>
            <person name="Cruzado L."/>
            <person name="Jimenez J."/>
            <person name="Sanchez M."/>
            <person name="del Rey F."/>
            <person name="Benito J."/>
            <person name="Dominguez A."/>
            <person name="Revuelta J.L."/>
            <person name="Moreno S."/>
            <person name="Armstrong J."/>
            <person name="Forsburg S.L."/>
            <person name="Cerutti L."/>
            <person name="Lowe T."/>
            <person name="McCombie W.R."/>
            <person name="Paulsen I."/>
            <person name="Potashkin J."/>
            <person name="Shpakovski G.V."/>
            <person name="Ussery D."/>
            <person name="Barrell B.G."/>
            <person name="Nurse P."/>
        </authorList>
    </citation>
    <scope>NUCLEOTIDE SEQUENCE [LARGE SCALE GENOMIC DNA]</scope>
    <source>
        <strain>972 / ATCC 24843</strain>
    </source>
</reference>
<reference key="2">
    <citation type="journal article" date="2005" name="Curr. Biol.">
        <title>A large-scale screen in S. pombe identifies seven novel genes required for critical meiotic events.</title>
        <authorList>
            <person name="Martin-Castellanos C."/>
            <person name="Blanco M."/>
            <person name="Rozalen A.E."/>
            <person name="Perez-Hidalgo L."/>
            <person name="Garcia A.I."/>
            <person name="Conde F."/>
            <person name="Mata J."/>
            <person name="Ellermeier C."/>
            <person name="Davis L."/>
            <person name="San-Segundo P."/>
            <person name="Smith G.R."/>
            <person name="Moreno S."/>
        </authorList>
    </citation>
    <scope>FUNCTION IN MEIOSIS/SPORULATION</scope>
</reference>
<reference key="3">
    <citation type="journal article" date="2006" name="Nat. Biotechnol.">
        <title>ORFeome cloning and global analysis of protein localization in the fission yeast Schizosaccharomyces pombe.</title>
        <authorList>
            <person name="Matsuyama A."/>
            <person name="Arai R."/>
            <person name="Yashiroda Y."/>
            <person name="Shirai A."/>
            <person name="Kamata A."/>
            <person name="Sekido S."/>
            <person name="Kobayashi Y."/>
            <person name="Hashimoto A."/>
            <person name="Hamamoto M."/>
            <person name="Hiraoka Y."/>
            <person name="Horinouchi S."/>
            <person name="Yoshida M."/>
        </authorList>
    </citation>
    <scope>SUBCELLULAR LOCATION [LARGE SCALE ANALYSIS]</scope>
</reference>
<reference key="4">
    <citation type="journal article" date="2008" name="J. Proteome Res.">
        <title>Phosphoproteome analysis of fission yeast.</title>
        <authorList>
            <person name="Wilson-Grady J.T."/>
            <person name="Villen J."/>
            <person name="Gygi S.P."/>
        </authorList>
    </citation>
    <scope>PHOSPHORYLATION [LARGE SCALE ANALYSIS] AT SER-180; SER-187; SER-189 AND THR-191</scope>
    <scope>IDENTIFICATION BY MASS SPECTROMETRY</scope>
</reference>